<dbReference type="EMBL" id="AE000782">
    <property type="protein sequence ID" value="AAB90898.1"/>
    <property type="molecule type" value="Genomic_DNA"/>
</dbReference>
<dbReference type="PIR" id="H69291">
    <property type="entry name" value="H69291"/>
</dbReference>
<dbReference type="RefSeq" id="WP_010877843.1">
    <property type="nucleotide sequence ID" value="NC_000917.1"/>
</dbReference>
<dbReference type="STRING" id="224325.AF_0336"/>
<dbReference type="PaxDb" id="224325-AF_0336"/>
<dbReference type="DNASU" id="1483550"/>
<dbReference type="EnsemblBacteria" id="AAB90898">
    <property type="protein sequence ID" value="AAB90898"/>
    <property type="gene ID" value="AF_0336"/>
</dbReference>
<dbReference type="GeneID" id="24793875"/>
<dbReference type="KEGG" id="afu:AF_0336"/>
<dbReference type="eggNOG" id="arCOG03013">
    <property type="taxonomic scope" value="Archaea"/>
</dbReference>
<dbReference type="HOGENOM" id="CLU_052778_0_0_2"/>
<dbReference type="OrthoDB" id="46081at2157"/>
<dbReference type="PhylomeDB" id="O29911"/>
<dbReference type="Proteomes" id="UP000002199">
    <property type="component" value="Chromosome"/>
</dbReference>
<dbReference type="GO" id="GO:1990077">
    <property type="term" value="C:primosome complex"/>
    <property type="evidence" value="ECO:0007669"/>
    <property type="project" value="UniProtKB-KW"/>
</dbReference>
<dbReference type="GO" id="GO:0051539">
    <property type="term" value="F:4 iron, 4 sulfur cluster binding"/>
    <property type="evidence" value="ECO:0007669"/>
    <property type="project" value="UniProtKB-UniRule"/>
</dbReference>
<dbReference type="GO" id="GO:0003899">
    <property type="term" value="F:DNA-directed RNA polymerase activity"/>
    <property type="evidence" value="ECO:0007669"/>
    <property type="project" value="InterPro"/>
</dbReference>
<dbReference type="GO" id="GO:0046872">
    <property type="term" value="F:metal ion binding"/>
    <property type="evidence" value="ECO:0007669"/>
    <property type="project" value="UniProtKB-KW"/>
</dbReference>
<dbReference type="GO" id="GO:0006270">
    <property type="term" value="P:DNA replication initiation"/>
    <property type="evidence" value="ECO:0007669"/>
    <property type="project" value="TreeGrafter"/>
</dbReference>
<dbReference type="GO" id="GO:0006269">
    <property type="term" value="P:DNA replication, synthesis of primer"/>
    <property type="evidence" value="ECO:0007669"/>
    <property type="project" value="UniProtKB-UniRule"/>
</dbReference>
<dbReference type="CDD" id="cd06560">
    <property type="entry name" value="PriL"/>
    <property type="match status" value="1"/>
</dbReference>
<dbReference type="HAMAP" id="MF_00701">
    <property type="entry name" value="DNA_primase_lrg_arc"/>
    <property type="match status" value="1"/>
</dbReference>
<dbReference type="InterPro" id="IPR007238">
    <property type="entry name" value="DNA_primase_lsu_euk/arc"/>
</dbReference>
<dbReference type="InterPro" id="IPR023642">
    <property type="entry name" value="DNA_primase_lsu_PriL"/>
</dbReference>
<dbReference type="NCBIfam" id="NF002589">
    <property type="entry name" value="PRK02249.1-3"/>
    <property type="match status" value="1"/>
</dbReference>
<dbReference type="PANTHER" id="PTHR10537">
    <property type="entry name" value="DNA PRIMASE LARGE SUBUNIT"/>
    <property type="match status" value="1"/>
</dbReference>
<dbReference type="PANTHER" id="PTHR10537:SF3">
    <property type="entry name" value="DNA PRIMASE LARGE SUBUNIT"/>
    <property type="match status" value="1"/>
</dbReference>
<dbReference type="Pfam" id="PF04104">
    <property type="entry name" value="DNA_primase_lrg"/>
    <property type="match status" value="1"/>
</dbReference>
<dbReference type="SUPFAM" id="SSF140914">
    <property type="entry name" value="PriB N-terminal domain-like"/>
    <property type="match status" value="1"/>
</dbReference>
<accession>O29911</accession>
<keyword id="KW-0004">4Fe-4S</keyword>
<keyword id="KW-0235">DNA replication</keyword>
<keyword id="KW-0408">Iron</keyword>
<keyword id="KW-0411">Iron-sulfur</keyword>
<keyword id="KW-0479">Metal-binding</keyword>
<keyword id="KW-0639">Primosome</keyword>
<keyword id="KW-1185">Reference proteome</keyword>
<protein>
    <recommendedName>
        <fullName evidence="1">DNA primase large subunit PriL</fullName>
    </recommendedName>
</protein>
<name>PRIL_ARCFU</name>
<reference key="1">
    <citation type="journal article" date="1997" name="Nature">
        <title>The complete genome sequence of the hyperthermophilic, sulphate-reducing archaeon Archaeoglobus fulgidus.</title>
        <authorList>
            <person name="Klenk H.-P."/>
            <person name="Clayton R.A."/>
            <person name="Tomb J.-F."/>
            <person name="White O."/>
            <person name="Nelson K.E."/>
            <person name="Ketchum K.A."/>
            <person name="Dodson R.J."/>
            <person name="Gwinn M.L."/>
            <person name="Hickey E.K."/>
            <person name="Peterson J.D."/>
            <person name="Richardson D.L."/>
            <person name="Kerlavage A.R."/>
            <person name="Graham D.E."/>
            <person name="Kyrpides N.C."/>
            <person name="Fleischmann R.D."/>
            <person name="Quackenbush J."/>
            <person name="Lee N.H."/>
            <person name="Sutton G.G."/>
            <person name="Gill S.R."/>
            <person name="Kirkness E.F."/>
            <person name="Dougherty B.A."/>
            <person name="McKenney K."/>
            <person name="Adams M.D."/>
            <person name="Loftus B.J."/>
            <person name="Peterson S.N."/>
            <person name="Reich C.I."/>
            <person name="McNeil L.K."/>
            <person name="Badger J.H."/>
            <person name="Glodek A."/>
            <person name="Zhou L."/>
            <person name="Overbeek R."/>
            <person name="Gocayne J.D."/>
            <person name="Weidman J.F."/>
            <person name="McDonald L.A."/>
            <person name="Utterback T.R."/>
            <person name="Cotton M.D."/>
            <person name="Spriggs T."/>
            <person name="Artiach P."/>
            <person name="Kaine B.P."/>
            <person name="Sykes S.M."/>
            <person name="Sadow P.W."/>
            <person name="D'Andrea K.P."/>
            <person name="Bowman C."/>
            <person name="Fujii C."/>
            <person name="Garland S.A."/>
            <person name="Mason T.M."/>
            <person name="Olsen G.J."/>
            <person name="Fraser C.M."/>
            <person name="Smith H.O."/>
            <person name="Woese C.R."/>
            <person name="Venter J.C."/>
        </authorList>
    </citation>
    <scope>NUCLEOTIDE SEQUENCE [LARGE SCALE GENOMIC DNA]</scope>
    <source>
        <strain>ATCC 49558 / DSM 4304 / JCM 9628 / NBRC 100126 / VC-16</strain>
    </source>
</reference>
<gene>
    <name evidence="1" type="primary">priL</name>
    <name type="synonym">priB</name>
    <name type="ordered locus">AF_0336</name>
</gene>
<feature type="chain" id="PRO_0000046777" description="DNA primase large subunit PriL">
    <location>
        <begin position="1"/>
        <end position="370"/>
    </location>
</feature>
<feature type="binding site" evidence="1">
    <location>
        <position position="268"/>
    </location>
    <ligand>
        <name>[4Fe-4S] cluster</name>
        <dbReference type="ChEBI" id="CHEBI:49883"/>
    </ligand>
</feature>
<feature type="binding site" evidence="1">
    <location>
        <position position="341"/>
    </location>
    <ligand>
        <name>[4Fe-4S] cluster</name>
        <dbReference type="ChEBI" id="CHEBI:49883"/>
    </ligand>
</feature>
<feature type="binding site" evidence="1">
    <location>
        <position position="350"/>
    </location>
    <ligand>
        <name>[4Fe-4S] cluster</name>
        <dbReference type="ChEBI" id="CHEBI:49883"/>
    </ligand>
</feature>
<feature type="binding site" evidence="1">
    <location>
        <position position="354"/>
    </location>
    <ligand>
        <name>[4Fe-4S] cluster</name>
        <dbReference type="ChEBI" id="CHEBI:49883"/>
    </ligand>
</feature>
<organism>
    <name type="scientific">Archaeoglobus fulgidus (strain ATCC 49558 / DSM 4304 / JCM 9628 / NBRC 100126 / VC-16)</name>
    <dbReference type="NCBI Taxonomy" id="224325"/>
    <lineage>
        <taxon>Archaea</taxon>
        <taxon>Methanobacteriati</taxon>
        <taxon>Methanobacteriota</taxon>
        <taxon>Archaeoglobi</taxon>
        <taxon>Archaeoglobales</taxon>
        <taxon>Archaeoglobaceae</taxon>
        <taxon>Archaeoglobus</taxon>
    </lineage>
</organism>
<comment type="function">
    <text evidence="1">Regulatory subunit of DNA primase, an RNA polymerase that catalyzes the synthesis of short RNA molecules used as primers for DNA polymerase during DNA replication. Stabilizes and modulates the activity of the small subunit, increasing the rate of DNA synthesis, and conferring RNA synthesis capability. The DNA polymerase activity may enable DNA primase to also catalyze primer extension after primer synthesis. May also play a role in DNA repair.</text>
</comment>
<comment type="cofactor">
    <cofactor evidence="1">
        <name>[4Fe-4S] cluster</name>
        <dbReference type="ChEBI" id="CHEBI:49883"/>
    </cofactor>
    <text evidence="1">Binds 1 [4Fe-4S] cluster.</text>
</comment>
<comment type="subunit">
    <text evidence="1">Heterodimer of a small subunit (PriS) and a large subunit (PriL).</text>
</comment>
<comment type="similarity">
    <text evidence="1">Belongs to the eukaryotic-type primase large subunit family.</text>
</comment>
<proteinExistence type="inferred from homology"/>
<evidence type="ECO:0000255" key="1">
    <source>
        <dbReference type="HAMAP-Rule" id="MF_00701"/>
    </source>
</evidence>
<sequence length="370" mass="42844">MKYLPLYPILARYPFLRIASRVFSFNIEDELRKFLDTVEAAKRIVDKAIDGRVEYDRFTDESEFFCLGCEENCYDCQKRGTLEGCDLCMGCFENCSLYYPREAVERFYTNAKLSLLTYIASRMIVSAMEDWVRMRYAVNEASYYSRLLREDVEESGKEPIVRLVAIDLGAKLKGWKMHVSTFVRVSARIKDDKWRLVNRKLRNGWVETTKAEVLRGLEELLRMKLFEKVPVSEAVSEAVRELSRKAKRESEKFAMDLGEVDLNCLPPCMREILSELQRGMNIPHTARFAITSFLLNIGMTVDEIIALFKSAPDFDDEKTRYQVEHIAGERGKGAEYTSPSCDTMRTYSNCVADCRVSHPLIYYKKCKSKS</sequence>